<organism>
    <name type="scientific">Limosilactobacillus fermentum (strain NBRC 3956 / LMG 18251)</name>
    <name type="common">Lactobacillus fermentum</name>
    <dbReference type="NCBI Taxonomy" id="334390"/>
    <lineage>
        <taxon>Bacteria</taxon>
        <taxon>Bacillati</taxon>
        <taxon>Bacillota</taxon>
        <taxon>Bacilli</taxon>
        <taxon>Lactobacillales</taxon>
        <taxon>Lactobacillaceae</taxon>
        <taxon>Limosilactobacillus</taxon>
    </lineage>
</organism>
<protein>
    <recommendedName>
        <fullName evidence="1">Large ribosomal subunit protein uL22</fullName>
    </recommendedName>
    <alternativeName>
        <fullName evidence="2">50S ribosomal protein L22</fullName>
    </alternativeName>
</protein>
<name>RL22_LIMF3</name>
<keyword id="KW-1185">Reference proteome</keyword>
<keyword id="KW-0687">Ribonucleoprotein</keyword>
<keyword id="KW-0689">Ribosomal protein</keyword>
<keyword id="KW-0694">RNA-binding</keyword>
<keyword id="KW-0699">rRNA-binding</keyword>
<evidence type="ECO:0000255" key="1">
    <source>
        <dbReference type="HAMAP-Rule" id="MF_01331"/>
    </source>
</evidence>
<evidence type="ECO:0000305" key="2"/>
<comment type="function">
    <text evidence="1">This protein binds specifically to 23S rRNA; its binding is stimulated by other ribosomal proteins, e.g. L4, L17, and L20. It is important during the early stages of 50S assembly. It makes multiple contacts with different domains of the 23S rRNA in the assembled 50S subunit and ribosome (By similarity).</text>
</comment>
<comment type="function">
    <text evidence="1">The globular domain of the protein is located near the polypeptide exit tunnel on the outside of the subunit, while an extended beta-hairpin is found that lines the wall of the exit tunnel in the center of the 70S ribosome.</text>
</comment>
<comment type="subunit">
    <text evidence="1">Part of the 50S ribosomal subunit.</text>
</comment>
<comment type="similarity">
    <text evidence="1">Belongs to the universal ribosomal protein uL22 family.</text>
</comment>
<proteinExistence type="inferred from homology"/>
<accession>B2GDW4</accession>
<dbReference type="EMBL" id="AP008937">
    <property type="protein sequence ID" value="BAG27846.1"/>
    <property type="molecule type" value="Genomic_DNA"/>
</dbReference>
<dbReference type="RefSeq" id="WP_003681579.1">
    <property type="nucleotide sequence ID" value="NC_010610.1"/>
</dbReference>
<dbReference type="SMR" id="B2GDW4"/>
<dbReference type="GeneID" id="83716113"/>
<dbReference type="KEGG" id="lfe:LAF_1510"/>
<dbReference type="eggNOG" id="COG0091">
    <property type="taxonomic scope" value="Bacteria"/>
</dbReference>
<dbReference type="HOGENOM" id="CLU_083987_3_3_9"/>
<dbReference type="Proteomes" id="UP000001697">
    <property type="component" value="Chromosome"/>
</dbReference>
<dbReference type="GO" id="GO:0022625">
    <property type="term" value="C:cytosolic large ribosomal subunit"/>
    <property type="evidence" value="ECO:0007669"/>
    <property type="project" value="TreeGrafter"/>
</dbReference>
<dbReference type="GO" id="GO:0019843">
    <property type="term" value="F:rRNA binding"/>
    <property type="evidence" value="ECO:0007669"/>
    <property type="project" value="UniProtKB-UniRule"/>
</dbReference>
<dbReference type="GO" id="GO:0003735">
    <property type="term" value="F:structural constituent of ribosome"/>
    <property type="evidence" value="ECO:0007669"/>
    <property type="project" value="InterPro"/>
</dbReference>
<dbReference type="GO" id="GO:0006412">
    <property type="term" value="P:translation"/>
    <property type="evidence" value="ECO:0007669"/>
    <property type="project" value="UniProtKB-UniRule"/>
</dbReference>
<dbReference type="CDD" id="cd00336">
    <property type="entry name" value="Ribosomal_L22"/>
    <property type="match status" value="1"/>
</dbReference>
<dbReference type="FunFam" id="3.90.470.10:FF:000001">
    <property type="entry name" value="50S ribosomal protein L22"/>
    <property type="match status" value="1"/>
</dbReference>
<dbReference type="Gene3D" id="3.90.470.10">
    <property type="entry name" value="Ribosomal protein L22/L17"/>
    <property type="match status" value="1"/>
</dbReference>
<dbReference type="HAMAP" id="MF_01331_B">
    <property type="entry name" value="Ribosomal_uL22_B"/>
    <property type="match status" value="1"/>
</dbReference>
<dbReference type="InterPro" id="IPR001063">
    <property type="entry name" value="Ribosomal_uL22"/>
</dbReference>
<dbReference type="InterPro" id="IPR005727">
    <property type="entry name" value="Ribosomal_uL22_bac/chlpt-type"/>
</dbReference>
<dbReference type="InterPro" id="IPR047867">
    <property type="entry name" value="Ribosomal_uL22_bac/org-type"/>
</dbReference>
<dbReference type="InterPro" id="IPR018260">
    <property type="entry name" value="Ribosomal_uL22_CS"/>
</dbReference>
<dbReference type="InterPro" id="IPR036394">
    <property type="entry name" value="Ribosomal_uL22_sf"/>
</dbReference>
<dbReference type="NCBIfam" id="TIGR01044">
    <property type="entry name" value="rplV_bact"/>
    <property type="match status" value="1"/>
</dbReference>
<dbReference type="PANTHER" id="PTHR13501">
    <property type="entry name" value="CHLOROPLAST 50S RIBOSOMAL PROTEIN L22-RELATED"/>
    <property type="match status" value="1"/>
</dbReference>
<dbReference type="PANTHER" id="PTHR13501:SF8">
    <property type="entry name" value="LARGE RIBOSOMAL SUBUNIT PROTEIN UL22M"/>
    <property type="match status" value="1"/>
</dbReference>
<dbReference type="Pfam" id="PF00237">
    <property type="entry name" value="Ribosomal_L22"/>
    <property type="match status" value="1"/>
</dbReference>
<dbReference type="SUPFAM" id="SSF54843">
    <property type="entry name" value="Ribosomal protein L22"/>
    <property type="match status" value="1"/>
</dbReference>
<dbReference type="PROSITE" id="PS00464">
    <property type="entry name" value="RIBOSOMAL_L22"/>
    <property type="match status" value="1"/>
</dbReference>
<feature type="chain" id="PRO_1000142276" description="Large ribosomal subunit protein uL22">
    <location>
        <begin position="1"/>
        <end position="115"/>
    </location>
</feature>
<reference key="1">
    <citation type="journal article" date="2008" name="DNA Res.">
        <title>Comparative genome analysis of Lactobacillus reuteri and Lactobacillus fermentum reveal a genomic island for reuterin and cobalamin production.</title>
        <authorList>
            <person name="Morita H."/>
            <person name="Toh H."/>
            <person name="Fukuda S."/>
            <person name="Horikawa H."/>
            <person name="Oshima K."/>
            <person name="Suzuki T."/>
            <person name="Murakami M."/>
            <person name="Hisamatsu S."/>
            <person name="Kato Y."/>
            <person name="Takizawa T."/>
            <person name="Fukuoka H."/>
            <person name="Yoshimura T."/>
            <person name="Itoh K."/>
            <person name="O'Sullivan D.J."/>
            <person name="McKay L.L."/>
            <person name="Ohno H."/>
            <person name="Kikuchi J."/>
            <person name="Masaoka T."/>
            <person name="Hattori M."/>
        </authorList>
    </citation>
    <scope>NUCLEOTIDE SEQUENCE [LARGE SCALE GENOMIC DNA]</scope>
    <source>
        <strain>NBRC 3956 / LMG 18251</strain>
    </source>
</reference>
<gene>
    <name evidence="1" type="primary">rplV</name>
    <name type="ordered locus">LAF_1510</name>
</gene>
<sequence length="115" mass="12355">MAENVTSAKATAKMVRVSSRKVRLVLDTIRNKSVAEAFAILKFTPNGAASDVEKVLKSAVANAENNFDLDQASLVVSEAFANEGPTLKRFRPRAKGSASPINKRTSHITVVVAEK</sequence>